<dbReference type="EC" id="4.99.1.3" evidence="1"/>
<dbReference type="EC" id="4.99.1.11" evidence="1"/>
<dbReference type="EMBL" id="BX950229">
    <property type="protein sequence ID" value="CAF29720.1"/>
    <property type="molecule type" value="Genomic_DNA"/>
</dbReference>
<dbReference type="RefSeq" id="WP_011170108.1">
    <property type="nucleotide sequence ID" value="NC_005791.1"/>
</dbReference>
<dbReference type="SMR" id="P61819"/>
<dbReference type="STRING" id="267377.MMP0164"/>
<dbReference type="EnsemblBacteria" id="CAF29720">
    <property type="protein sequence ID" value="CAF29720"/>
    <property type="gene ID" value="MMP0164"/>
</dbReference>
<dbReference type="GeneID" id="10981594"/>
<dbReference type="GeneID" id="2762548"/>
<dbReference type="KEGG" id="mmp:MMP0164"/>
<dbReference type="PATRIC" id="fig|267377.15.peg.168"/>
<dbReference type="eggNOG" id="arCOG02246">
    <property type="taxonomic scope" value="Archaea"/>
</dbReference>
<dbReference type="HOGENOM" id="CLU_065901_2_1_2"/>
<dbReference type="OrthoDB" id="11653at2157"/>
<dbReference type="UniPathway" id="UPA00148">
    <property type="reaction ID" value="UER00223"/>
</dbReference>
<dbReference type="Proteomes" id="UP000000590">
    <property type="component" value="Chromosome"/>
</dbReference>
<dbReference type="GO" id="GO:0050897">
    <property type="term" value="F:cobalt ion binding"/>
    <property type="evidence" value="ECO:0007669"/>
    <property type="project" value="UniProtKB-UniRule"/>
</dbReference>
<dbReference type="GO" id="GO:0016151">
    <property type="term" value="F:nickel cation binding"/>
    <property type="evidence" value="ECO:0007669"/>
    <property type="project" value="UniProtKB-UniRule"/>
</dbReference>
<dbReference type="GO" id="GO:0016852">
    <property type="term" value="F:sirohydrochlorin cobaltochelatase activity"/>
    <property type="evidence" value="ECO:0007669"/>
    <property type="project" value="UniProtKB-UniRule"/>
</dbReference>
<dbReference type="GO" id="GO:0019251">
    <property type="term" value="P:anaerobic cobalamin biosynthetic process"/>
    <property type="evidence" value="ECO:0007669"/>
    <property type="project" value="UniProtKB-UniRule"/>
</dbReference>
<dbReference type="GO" id="GO:0015948">
    <property type="term" value="P:methanogenesis"/>
    <property type="evidence" value="ECO:0007669"/>
    <property type="project" value="UniProtKB-KW"/>
</dbReference>
<dbReference type="CDD" id="cd03416">
    <property type="entry name" value="CbiX_SirB_N"/>
    <property type="match status" value="1"/>
</dbReference>
<dbReference type="Gene3D" id="3.40.50.1400">
    <property type="match status" value="1"/>
</dbReference>
<dbReference type="HAMAP" id="MF_00785">
    <property type="entry name" value="CbiX"/>
    <property type="match status" value="1"/>
</dbReference>
<dbReference type="InterPro" id="IPR002762">
    <property type="entry name" value="CbiX-like"/>
</dbReference>
<dbReference type="InterPro" id="IPR023652">
    <property type="entry name" value="SiroHydchlorin_Cochelatase"/>
</dbReference>
<dbReference type="InterPro" id="IPR050963">
    <property type="entry name" value="Sirohydro_Cobaltochel/CbiX"/>
</dbReference>
<dbReference type="NCBIfam" id="NF033198">
    <property type="entry name" value="F430_CfbA"/>
    <property type="match status" value="1"/>
</dbReference>
<dbReference type="NCBIfam" id="NF002090">
    <property type="entry name" value="PRK00923.1"/>
    <property type="match status" value="1"/>
</dbReference>
<dbReference type="PANTHER" id="PTHR33542">
    <property type="entry name" value="SIROHYDROCHLORIN FERROCHELATASE, CHLOROPLASTIC"/>
    <property type="match status" value="1"/>
</dbReference>
<dbReference type="PANTHER" id="PTHR33542:SF3">
    <property type="entry name" value="SIROHYDROCHLORIN FERROCHELATASE, CHLOROPLASTIC"/>
    <property type="match status" value="1"/>
</dbReference>
<dbReference type="Pfam" id="PF01903">
    <property type="entry name" value="CbiX"/>
    <property type="match status" value="1"/>
</dbReference>
<dbReference type="SUPFAM" id="SSF53800">
    <property type="entry name" value="Chelatase"/>
    <property type="match status" value="1"/>
</dbReference>
<comment type="function">
    <text evidence="1">Catalyzes the insertion of Co(2+) into sirohydrochlorin as part of the anaerobic pathway to cobalamin biosynthesis. Involved in the biosynthesis of the unique nickel-containing tetrapyrrole coenzyme F430, the prosthetic group of methyl-coenzyme M reductase (MCR), which plays a key role in methanogenesis and anaerobic methane oxidation. Catalyzes the insertion of Ni(2+) into sirohydrochlorin to yield Ni-sirohydrochlorin.</text>
</comment>
<comment type="catalytic activity">
    <reaction evidence="1">
        <text>Co-sirohydrochlorin + 2 H(+) = sirohydrochlorin + Co(2+)</text>
        <dbReference type="Rhea" id="RHEA:15893"/>
        <dbReference type="ChEBI" id="CHEBI:15378"/>
        <dbReference type="ChEBI" id="CHEBI:48828"/>
        <dbReference type="ChEBI" id="CHEBI:58351"/>
        <dbReference type="ChEBI" id="CHEBI:60049"/>
        <dbReference type="EC" id="4.99.1.3"/>
    </reaction>
</comment>
<comment type="catalytic activity">
    <reaction evidence="1">
        <text>Ni-sirohydrochlorin + 2 H(+) = sirohydrochlorin + Ni(2+)</text>
        <dbReference type="Rhea" id="RHEA:52796"/>
        <dbReference type="ChEBI" id="CHEBI:15378"/>
        <dbReference type="ChEBI" id="CHEBI:49786"/>
        <dbReference type="ChEBI" id="CHEBI:58351"/>
        <dbReference type="ChEBI" id="CHEBI:136841"/>
        <dbReference type="EC" id="4.99.1.11"/>
    </reaction>
</comment>
<comment type="pathway">
    <text evidence="1">Cofactor biosynthesis; adenosylcobalamin biosynthesis; cob(II)yrinate a,c-diamide from sirohydrochlorin (anaerobic route): step 1/10.</text>
</comment>
<comment type="subunit">
    <text evidence="1">Homotetramer; dimer of dimers.</text>
</comment>
<comment type="similarity">
    <text evidence="1">Belongs to the CbiX family. CbiXS subfamily.</text>
</comment>
<reference key="1">
    <citation type="journal article" date="2004" name="J. Bacteriol.">
        <title>Complete genome sequence of the genetically tractable hydrogenotrophic methanogen Methanococcus maripaludis.</title>
        <authorList>
            <person name="Hendrickson E.L."/>
            <person name="Kaul R."/>
            <person name="Zhou Y."/>
            <person name="Bovee D."/>
            <person name="Chapman P."/>
            <person name="Chung J."/>
            <person name="Conway de Macario E."/>
            <person name="Dodsworth J.A."/>
            <person name="Gillett W."/>
            <person name="Graham D.E."/>
            <person name="Hackett M."/>
            <person name="Haydock A.K."/>
            <person name="Kang A."/>
            <person name="Land M.L."/>
            <person name="Levy R."/>
            <person name="Lie T.J."/>
            <person name="Major T.A."/>
            <person name="Moore B.C."/>
            <person name="Porat I."/>
            <person name="Palmeiri A."/>
            <person name="Rouse G."/>
            <person name="Saenphimmachak C."/>
            <person name="Soell D."/>
            <person name="Van Dien S."/>
            <person name="Wang T."/>
            <person name="Whitman W.B."/>
            <person name="Xia Q."/>
            <person name="Zhang Y."/>
            <person name="Larimer F.W."/>
            <person name="Olson M.V."/>
            <person name="Leigh J.A."/>
        </authorList>
    </citation>
    <scope>NUCLEOTIDE SEQUENCE [LARGE SCALE GENOMIC DNA]</scope>
    <source>
        <strain>DSM 14266 / JCM 13030 / NBRC 101832 / S2 / LL</strain>
    </source>
</reference>
<organism>
    <name type="scientific">Methanococcus maripaludis (strain DSM 14266 / JCM 13030 / NBRC 101832 / S2 / LL)</name>
    <dbReference type="NCBI Taxonomy" id="267377"/>
    <lineage>
        <taxon>Archaea</taxon>
        <taxon>Methanobacteriati</taxon>
        <taxon>Methanobacteriota</taxon>
        <taxon>Methanomada group</taxon>
        <taxon>Methanococci</taxon>
        <taxon>Methanococcales</taxon>
        <taxon>Methanococcaceae</taxon>
        <taxon>Methanococcus</taxon>
    </lineage>
</organism>
<sequence length="144" mass="16107">MEALVLVGHGSRLPHSKNVVMEVAEKIKARNIYDIVEVGMMEFNEPTIPQTIKKVIDAGAKKVIVTPVFLAPGNHTERDIPKILGIYEGDDEGGHHHHHDHEHHHHHHDTTAVEIPEGVELVYRKPMGADDRIIDIVLDRANGL</sequence>
<keyword id="KW-0169">Cobalamin biosynthesis</keyword>
<keyword id="KW-0170">Cobalt</keyword>
<keyword id="KW-0456">Lyase</keyword>
<keyword id="KW-0479">Metal-binding</keyword>
<keyword id="KW-0484">Methanogenesis</keyword>
<keyword id="KW-0533">Nickel</keyword>
<keyword id="KW-1185">Reference proteome</keyword>
<name>CFBA_METMP</name>
<feature type="chain" id="PRO_0000150359" description="Sirohydrochlorin cobaltochelatase">
    <location>
        <begin position="1"/>
        <end position="144"/>
    </location>
</feature>
<feature type="region of interest" description="Disordered" evidence="2">
    <location>
        <begin position="89"/>
        <end position="112"/>
    </location>
</feature>
<feature type="compositionally biased region" description="Basic residues" evidence="2">
    <location>
        <begin position="95"/>
        <end position="108"/>
    </location>
</feature>
<feature type="active site" description="Proton acceptor" evidence="1">
    <location>
        <position position="9"/>
    </location>
</feature>
<feature type="binding site" evidence="1">
    <location>
        <position position="9"/>
    </location>
    <ligand>
        <name>Co(2+)</name>
        <dbReference type="ChEBI" id="CHEBI:48828"/>
    </ligand>
</feature>
<feature type="binding site" evidence="1">
    <location>
        <position position="9"/>
    </location>
    <ligand>
        <name>Ni(2+)</name>
        <dbReference type="ChEBI" id="CHEBI:49786"/>
    </ligand>
</feature>
<feature type="binding site" evidence="1">
    <location>
        <position position="45"/>
    </location>
    <ligand>
        <name>substrate</name>
    </ligand>
</feature>
<feature type="binding site" evidence="1">
    <location>
        <begin position="70"/>
        <end position="75"/>
    </location>
    <ligand>
        <name>substrate</name>
    </ligand>
</feature>
<feature type="binding site" evidence="1">
    <location>
        <position position="75"/>
    </location>
    <ligand>
        <name>Co(2+)</name>
        <dbReference type="ChEBI" id="CHEBI:48828"/>
    </ligand>
</feature>
<feature type="binding site" evidence="1">
    <location>
        <position position="75"/>
    </location>
    <ligand>
        <name>Ni(2+)</name>
        <dbReference type="ChEBI" id="CHEBI:49786"/>
    </ligand>
</feature>
<protein>
    <recommendedName>
        <fullName evidence="1">Sirohydrochlorin cobaltochelatase</fullName>
        <ecNumber evidence="1">4.99.1.3</ecNumber>
    </recommendedName>
    <alternativeName>
        <fullName evidence="1">CbiXS</fullName>
    </alternativeName>
    <alternativeName>
        <fullName evidence="1">Sirohydrochlorin nickelchelatase</fullName>
        <ecNumber evidence="1">4.99.1.11</ecNumber>
    </alternativeName>
</protein>
<evidence type="ECO:0000255" key="1">
    <source>
        <dbReference type="HAMAP-Rule" id="MF_00785"/>
    </source>
</evidence>
<evidence type="ECO:0000256" key="2">
    <source>
        <dbReference type="SAM" id="MobiDB-lite"/>
    </source>
</evidence>
<proteinExistence type="inferred from homology"/>
<accession>P61819</accession>
<gene>
    <name evidence="1" type="primary">cbiX</name>
    <name type="synonym">cbiX(s)</name>
    <name evidence="1" type="synonym">cfbA</name>
    <name type="ordered locus">MMP0164</name>
</gene>